<organism>
    <name type="scientific">Bos taurus</name>
    <name type="common">Bovine</name>
    <dbReference type="NCBI Taxonomy" id="9913"/>
    <lineage>
        <taxon>Eukaryota</taxon>
        <taxon>Metazoa</taxon>
        <taxon>Chordata</taxon>
        <taxon>Craniata</taxon>
        <taxon>Vertebrata</taxon>
        <taxon>Euteleostomi</taxon>
        <taxon>Mammalia</taxon>
        <taxon>Eutheria</taxon>
        <taxon>Laurasiatheria</taxon>
        <taxon>Artiodactyla</taxon>
        <taxon>Ruminantia</taxon>
        <taxon>Pecora</taxon>
        <taxon>Bovidae</taxon>
        <taxon>Bovinae</taxon>
        <taxon>Bos</taxon>
    </lineage>
</organism>
<proteinExistence type="evidence at protein level"/>
<accession>Q2KJ93</accession>
<dbReference type="EC" id="3.6.5.2" evidence="2 3"/>
<dbReference type="EMBL" id="AAFC03029033">
    <property type="status" value="NOT_ANNOTATED_CDS"/>
    <property type="molecule type" value="Genomic_DNA"/>
</dbReference>
<dbReference type="EMBL" id="AAFC03029034">
    <property type="status" value="NOT_ANNOTATED_CDS"/>
    <property type="molecule type" value="Genomic_DNA"/>
</dbReference>
<dbReference type="EMBL" id="AAFC03029036">
    <property type="status" value="NOT_ANNOTATED_CDS"/>
    <property type="molecule type" value="Genomic_DNA"/>
</dbReference>
<dbReference type="EMBL" id="AAFC03128156">
    <property type="status" value="NOT_ANNOTATED_CDS"/>
    <property type="molecule type" value="Genomic_DNA"/>
</dbReference>
<dbReference type="EMBL" id="BC105461">
    <property type="protein sequence ID" value="AAI05462.1"/>
    <property type="molecule type" value="mRNA"/>
</dbReference>
<dbReference type="RefSeq" id="NP_001039797.1">
    <molecule id="Q2KJ93-1"/>
    <property type="nucleotide sequence ID" value="NM_001046332.1"/>
</dbReference>
<dbReference type="BMRB" id="Q2KJ93"/>
<dbReference type="SMR" id="Q2KJ93"/>
<dbReference type="FunCoup" id="Q2KJ93">
    <property type="interactions" value="4782"/>
</dbReference>
<dbReference type="STRING" id="9913.ENSBTAP00000059852"/>
<dbReference type="PaxDb" id="9913-ENSBTAP00000041451"/>
<dbReference type="PeptideAtlas" id="Q2KJ93"/>
<dbReference type="Ensembl" id="ENSBTAT00000088453.1">
    <molecule id="Q2KJ93-2"/>
    <property type="protein sequence ID" value="ENSBTAP00000080424.1"/>
    <property type="gene ID" value="ENSBTAG00000001700.7"/>
</dbReference>
<dbReference type="GeneID" id="532712"/>
<dbReference type="KEGG" id="bta:532712"/>
<dbReference type="CTD" id="998"/>
<dbReference type="VEuPathDB" id="HostDB:ENSBTAG00000001700"/>
<dbReference type="GeneTree" id="ENSGT01130000278295"/>
<dbReference type="InParanoid" id="Q2KJ93"/>
<dbReference type="OMA" id="GDEPYTF"/>
<dbReference type="OrthoDB" id="8830751at2759"/>
<dbReference type="Reactome" id="R-BTA-114604">
    <property type="pathway name" value="GPVI-mediated activation cascade"/>
</dbReference>
<dbReference type="Reactome" id="R-BTA-182971">
    <property type="pathway name" value="EGFR downregulation"/>
</dbReference>
<dbReference type="Reactome" id="R-BTA-2029482">
    <property type="pathway name" value="Regulation of actin dynamics for phagocytic cup formation"/>
</dbReference>
<dbReference type="Reactome" id="R-BTA-389359">
    <property type="pathway name" value="CD28 dependent Vav1 pathway"/>
</dbReference>
<dbReference type="Reactome" id="R-BTA-3928662">
    <property type="pathway name" value="EPHB-mediated forward signaling"/>
</dbReference>
<dbReference type="Reactome" id="R-BTA-418885">
    <property type="pathway name" value="DCC mediated attractive signaling"/>
</dbReference>
<dbReference type="Reactome" id="R-BTA-4420097">
    <property type="pathway name" value="VEGFA-VEGFR2 Pathway"/>
</dbReference>
<dbReference type="Reactome" id="R-BTA-525793">
    <property type="pathway name" value="Myogenesis"/>
</dbReference>
<dbReference type="Reactome" id="R-BTA-5625970">
    <property type="pathway name" value="RHO GTPases activate KTN1"/>
</dbReference>
<dbReference type="Reactome" id="R-BTA-5626467">
    <property type="pathway name" value="RHO GTPases activate IQGAPs"/>
</dbReference>
<dbReference type="Reactome" id="R-BTA-5627123">
    <property type="pathway name" value="RHO GTPases activate PAKs"/>
</dbReference>
<dbReference type="Reactome" id="R-BTA-5663213">
    <property type="pathway name" value="RHO GTPases Activate WASPs and WAVEs"/>
</dbReference>
<dbReference type="Reactome" id="R-BTA-5663220">
    <property type="pathway name" value="RHO GTPases Activate Formins"/>
</dbReference>
<dbReference type="Reactome" id="R-BTA-5687128">
    <property type="pathway name" value="MAPK6/MAPK4 signaling"/>
</dbReference>
<dbReference type="Reactome" id="R-BTA-8964616">
    <property type="pathway name" value="G beta:gamma signalling through CDC42"/>
</dbReference>
<dbReference type="Reactome" id="R-BTA-9013148">
    <property type="pathway name" value="CDC42 GTPase cycle"/>
</dbReference>
<dbReference type="Reactome" id="R-BTA-9013149">
    <property type="pathway name" value="RAC1 GTPase cycle"/>
</dbReference>
<dbReference type="Reactome" id="R-BTA-9013404">
    <property type="pathway name" value="RAC2 GTPase cycle"/>
</dbReference>
<dbReference type="Reactome" id="R-BTA-9013406">
    <property type="pathway name" value="RHOQ GTPase cycle"/>
</dbReference>
<dbReference type="Reactome" id="R-BTA-9013408">
    <property type="pathway name" value="RHOG GTPase cycle"/>
</dbReference>
<dbReference type="Reactome" id="R-BTA-9013420">
    <property type="pathway name" value="RHOU GTPase cycle"/>
</dbReference>
<dbReference type="Reactome" id="R-BTA-9013423">
    <property type="pathway name" value="RAC3 GTPase cycle"/>
</dbReference>
<dbReference type="Reactome" id="R-BTA-9013424">
    <property type="pathway name" value="RHOV GTPase cycle"/>
</dbReference>
<dbReference type="Reactome" id="R-BTA-983231">
    <property type="pathway name" value="Factors involved in megakaryocyte development and platelet production"/>
</dbReference>
<dbReference type="Proteomes" id="UP000009136">
    <property type="component" value="Chromosome 2"/>
</dbReference>
<dbReference type="Bgee" id="ENSBTAG00000001700">
    <property type="expression patterns" value="Expressed in milk and 106 other cell types or tissues"/>
</dbReference>
<dbReference type="GO" id="GO:0005813">
    <property type="term" value="C:centrosome"/>
    <property type="evidence" value="ECO:0007669"/>
    <property type="project" value="UniProtKB-SubCell"/>
</dbReference>
<dbReference type="GO" id="GO:0005737">
    <property type="term" value="C:cytoplasm"/>
    <property type="evidence" value="ECO:0007669"/>
    <property type="project" value="UniProtKB-SubCell"/>
</dbReference>
<dbReference type="GO" id="GO:0030425">
    <property type="term" value="C:dendrite"/>
    <property type="evidence" value="ECO:0007669"/>
    <property type="project" value="UniProtKB-SubCell"/>
</dbReference>
<dbReference type="GO" id="GO:0031258">
    <property type="term" value="C:lamellipodium membrane"/>
    <property type="evidence" value="ECO:0007669"/>
    <property type="project" value="UniProtKB-SubCell"/>
</dbReference>
<dbReference type="GO" id="GO:0016020">
    <property type="term" value="C:membrane"/>
    <property type="evidence" value="ECO:0000250"/>
    <property type="project" value="UniProtKB"/>
</dbReference>
<dbReference type="GO" id="GO:0030496">
    <property type="term" value="C:midbody"/>
    <property type="evidence" value="ECO:0000250"/>
    <property type="project" value="UniProtKB"/>
</dbReference>
<dbReference type="GO" id="GO:0072686">
    <property type="term" value="C:mitotic spindle"/>
    <property type="evidence" value="ECO:0000250"/>
    <property type="project" value="UniProtKB"/>
</dbReference>
<dbReference type="GO" id="GO:0005886">
    <property type="term" value="C:plasma membrane"/>
    <property type="evidence" value="ECO:0000318"/>
    <property type="project" value="GO_Central"/>
</dbReference>
<dbReference type="GO" id="GO:0051233">
    <property type="term" value="C:spindle midzone"/>
    <property type="evidence" value="ECO:0000250"/>
    <property type="project" value="UniProtKB"/>
</dbReference>
<dbReference type="GO" id="GO:0003925">
    <property type="term" value="F:G protein activity"/>
    <property type="evidence" value="ECO:0007669"/>
    <property type="project" value="UniProtKB-EC"/>
</dbReference>
<dbReference type="GO" id="GO:0005525">
    <property type="term" value="F:GTP binding"/>
    <property type="evidence" value="ECO:0000318"/>
    <property type="project" value="GO_Central"/>
</dbReference>
<dbReference type="GO" id="GO:0003924">
    <property type="term" value="F:GTPase activity"/>
    <property type="evidence" value="ECO:0000318"/>
    <property type="project" value="GO_Central"/>
</dbReference>
<dbReference type="GO" id="GO:0019901">
    <property type="term" value="F:protein kinase binding"/>
    <property type="evidence" value="ECO:0000318"/>
    <property type="project" value="GO_Central"/>
</dbReference>
<dbReference type="GO" id="GO:0007015">
    <property type="term" value="P:actin filament organization"/>
    <property type="evidence" value="ECO:0000250"/>
    <property type="project" value="UniProtKB"/>
</dbReference>
<dbReference type="GO" id="GO:0034329">
    <property type="term" value="P:cell junction assembly"/>
    <property type="evidence" value="ECO:0000250"/>
    <property type="project" value="UniProtKB"/>
</dbReference>
<dbReference type="GO" id="GO:0060997">
    <property type="term" value="P:dendritic spine morphogenesis"/>
    <property type="evidence" value="ECO:0000250"/>
    <property type="project" value="UniProtKB"/>
</dbReference>
<dbReference type="GO" id="GO:0006897">
    <property type="term" value="P:endocytosis"/>
    <property type="evidence" value="ECO:0000318"/>
    <property type="project" value="GO_Central"/>
</dbReference>
<dbReference type="GO" id="GO:0030010">
    <property type="term" value="P:establishment of cell polarity"/>
    <property type="evidence" value="ECO:0000318"/>
    <property type="project" value="GO_Central"/>
</dbReference>
<dbReference type="GO" id="GO:0045198">
    <property type="term" value="P:establishment of epithelial cell apical/basal polarity"/>
    <property type="evidence" value="ECO:0000250"/>
    <property type="project" value="UniProtKB"/>
</dbReference>
<dbReference type="GO" id="GO:0006911">
    <property type="term" value="P:phagocytosis, engulfment"/>
    <property type="evidence" value="ECO:0000250"/>
    <property type="project" value="UniProtKB"/>
</dbReference>
<dbReference type="GO" id="GO:0032467">
    <property type="term" value="P:positive regulation of cytokinesis"/>
    <property type="evidence" value="ECO:0000250"/>
    <property type="project" value="UniProtKB"/>
</dbReference>
<dbReference type="GO" id="GO:0051491">
    <property type="term" value="P:positive regulation of filopodium assembly"/>
    <property type="evidence" value="ECO:0000250"/>
    <property type="project" value="UniProtKB"/>
</dbReference>
<dbReference type="GO" id="GO:0048549">
    <property type="term" value="P:positive regulation of pinocytosis"/>
    <property type="evidence" value="ECO:0000250"/>
    <property type="project" value="UniProtKB"/>
</dbReference>
<dbReference type="GO" id="GO:1900026">
    <property type="term" value="P:positive regulation of substrate adhesion-dependent cell spreading"/>
    <property type="evidence" value="ECO:0000250"/>
    <property type="project" value="UniProtKB"/>
</dbReference>
<dbReference type="GO" id="GO:0051988">
    <property type="term" value="P:regulation of attachment of spindle microtubules to kinetochore"/>
    <property type="evidence" value="ECO:0000250"/>
    <property type="project" value="UniProtKB"/>
</dbReference>
<dbReference type="GO" id="GO:0051489">
    <property type="term" value="P:regulation of filopodium assembly"/>
    <property type="evidence" value="ECO:0000250"/>
    <property type="project" value="UniProtKB"/>
</dbReference>
<dbReference type="GO" id="GO:0007165">
    <property type="term" value="P:signal transduction"/>
    <property type="evidence" value="ECO:0000318"/>
    <property type="project" value="GO_Central"/>
</dbReference>
<dbReference type="GO" id="GO:0007264">
    <property type="term" value="P:small GTPase-mediated signal transduction"/>
    <property type="evidence" value="ECO:0007669"/>
    <property type="project" value="InterPro"/>
</dbReference>
<dbReference type="CDD" id="cd01874">
    <property type="entry name" value="Cdc42"/>
    <property type="match status" value="1"/>
</dbReference>
<dbReference type="FunFam" id="3.40.50.300:FF:000167">
    <property type="entry name" value="Cell division control protein 42 homolog"/>
    <property type="match status" value="1"/>
</dbReference>
<dbReference type="Gene3D" id="3.40.50.300">
    <property type="entry name" value="P-loop containing nucleotide triphosphate hydrolases"/>
    <property type="match status" value="1"/>
</dbReference>
<dbReference type="InterPro" id="IPR037874">
    <property type="entry name" value="Cdc42"/>
</dbReference>
<dbReference type="InterPro" id="IPR027417">
    <property type="entry name" value="P-loop_NTPase"/>
</dbReference>
<dbReference type="InterPro" id="IPR005225">
    <property type="entry name" value="Small_GTP-bd"/>
</dbReference>
<dbReference type="InterPro" id="IPR001806">
    <property type="entry name" value="Small_GTPase"/>
</dbReference>
<dbReference type="InterPro" id="IPR003578">
    <property type="entry name" value="Small_GTPase_Rho"/>
</dbReference>
<dbReference type="NCBIfam" id="TIGR00231">
    <property type="entry name" value="small_GTP"/>
    <property type="match status" value="1"/>
</dbReference>
<dbReference type="PANTHER" id="PTHR24072">
    <property type="entry name" value="RHO FAMILY GTPASE"/>
    <property type="match status" value="1"/>
</dbReference>
<dbReference type="Pfam" id="PF00071">
    <property type="entry name" value="Ras"/>
    <property type="match status" value="1"/>
</dbReference>
<dbReference type="PRINTS" id="PR00449">
    <property type="entry name" value="RASTRNSFRMNG"/>
</dbReference>
<dbReference type="SMART" id="SM00175">
    <property type="entry name" value="RAB"/>
    <property type="match status" value="1"/>
</dbReference>
<dbReference type="SMART" id="SM00173">
    <property type="entry name" value="RAS"/>
    <property type="match status" value="1"/>
</dbReference>
<dbReference type="SMART" id="SM00174">
    <property type="entry name" value="RHO"/>
    <property type="match status" value="1"/>
</dbReference>
<dbReference type="SUPFAM" id="SSF52540">
    <property type="entry name" value="P-loop containing nucleoside triphosphate hydrolases"/>
    <property type="match status" value="1"/>
</dbReference>
<dbReference type="PROSITE" id="PS51420">
    <property type="entry name" value="RHO"/>
    <property type="match status" value="1"/>
</dbReference>
<keyword id="KW-0025">Alternative splicing</keyword>
<keyword id="KW-1003">Cell membrane</keyword>
<keyword id="KW-0966">Cell projection</keyword>
<keyword id="KW-0963">Cytoplasm</keyword>
<keyword id="KW-0206">Cytoskeleton</keyword>
<keyword id="KW-0221">Differentiation</keyword>
<keyword id="KW-0903">Direct protein sequencing</keyword>
<keyword id="KW-0342">GTP-binding</keyword>
<keyword id="KW-0378">Hydrolase</keyword>
<keyword id="KW-0449">Lipoprotein</keyword>
<keyword id="KW-0472">Membrane</keyword>
<keyword id="KW-0488">Methylation</keyword>
<keyword id="KW-0524">Neurogenesis</keyword>
<keyword id="KW-0547">Nucleotide-binding</keyword>
<keyword id="KW-0597">Phosphoprotein</keyword>
<keyword id="KW-0636">Prenylation</keyword>
<keyword id="KW-1185">Reference proteome</keyword>
<name>CDC42_BOVIN</name>
<protein>
    <recommendedName>
        <fullName>Cell division control protein 42 homolog</fullName>
        <ecNumber evidence="2 3">3.6.5.2</ecNumber>
    </recommendedName>
</protein>
<comment type="function">
    <text evidence="2 3 4">Plasma membrane-associated small GTPase which cycles between an active GTP-bound and an inactive GDP-bound state. In active state binds to a variety of effector proteins to regulate cellular responses. Involved in epithelial cell polarization processes. Regulates the bipolar attachment of spindle microtubules to kinetochores before chromosome congression in metaphase. Regulates cell migration. In neurons, plays a role in the extension and maintenance of the formation of filopodia, thin and actin-rich surface projections (By similarity). Required for DOCK10-mediated spine formation in Purkinje cells and hippocampal neurons. Facilitates filopodia formation upon DOCK11-activation (By similarity). Upon activation by CaMKII, modulates dendritic spine structural plasticity by relaying CaMKII transient activation to synapse-specific, long-term signaling (By similarity). Also plays a role in phagocytosis through organization of the F-actin cytoskeleton associated with forming phagocytic cups (By similarity). Upon activation by PLEKHG4B, involved in actin cytoskeletal remodeling during epithelial cell-cell junction formation (By similarity).</text>
</comment>
<comment type="catalytic activity">
    <reaction evidence="2 3">
        <text>GTP + H2O = GDP + phosphate + H(+)</text>
        <dbReference type="Rhea" id="RHEA:19669"/>
        <dbReference type="ChEBI" id="CHEBI:15377"/>
        <dbReference type="ChEBI" id="CHEBI:15378"/>
        <dbReference type="ChEBI" id="CHEBI:37565"/>
        <dbReference type="ChEBI" id="CHEBI:43474"/>
        <dbReference type="ChEBI" id="CHEBI:58189"/>
        <dbReference type="EC" id="3.6.5.2"/>
    </reaction>
    <physiologicalReaction direction="left-to-right" evidence="2 3">
        <dbReference type="Rhea" id="RHEA:19670"/>
    </physiologicalReaction>
</comment>
<comment type="activity regulation">
    <text evidence="2 3">Regulated by guanine nucleotide exchange factors (GEFs) which promote the exchange of bound GDP for free GTP, GTPase activating proteins (GAPs) which increase the GTP hydrolysis activity, and GDP dissociation inhibitors which inhibit the dissociation of the nucleotide from the GTPase.</text>
</comment>
<comment type="subunit">
    <text evidence="2 3">Interacts with CDC42EP1, CDC42EP2, CDC42EP3, CDC42EP4, CDC42EP5, CDC42SE1, CDC42SE2, PARD6A, PARD6B and PARD6G (in a GTP-dependent manner). Interacts with activated CSPG4 and with BAIAP2. Interacts with DOCK11/Zizimin2; the interaction activates CDC42 by exchanging GDP for GTP. Interacts with DOCK9; the interaction activates CDC42 by exchanging GDP for GTP. Interacts with DOCK8 (via DHR-2 domain); the interaction activates CDC42 by exchanging GDP for GTP. Interacts with IQGAP1. Interacts with NET1 and ARHGAP33/TCGAP. Part of a complex with PARD3, PARD6A or PARD6B and PRKCI or PRKCZ. The GTP-bound form interacts with CCPG1. Interacts with USP6. Interacts with NEK6. Part of a collagen stimulated complex involved in cell migration composed of CDC42, CRK, TNK2 and BCAR1/p130cas. Interacts with ITGB1BP1. Interacts with ARHGDIA; this interaction inactivates and stabilizes CDC42. Interacts with ARHGDIB; this maintains CDC42 in the inactive, GDP-bound form. Interacts in (GTP-bound form) with FNBP1L and ABI1, but only in the presence of FNBP1L. Interacts with MARCKS (By similarity). Interacts with CD151 and ITGB1 (By similarity).</text>
</comment>
<comment type="subcellular location">
    <subcellularLocation>
        <location evidence="2">Cell membrane</location>
        <topology evidence="2">Lipid-anchor</topology>
        <orientation evidence="2">Cytoplasmic side</orientation>
    </subcellularLocation>
    <subcellularLocation>
        <location evidence="3">Midbody</location>
    </subcellularLocation>
    <subcellularLocation>
        <location evidence="3">Cytoplasm</location>
        <location evidence="3">Cytoskeleton</location>
        <location evidence="3">Microtubule organizing center</location>
        <location evidence="3">Centrosome</location>
    </subcellularLocation>
    <subcellularLocation>
        <location evidence="3">Cytoplasm</location>
        <location evidence="3">Cytoskeleton</location>
        <location evidence="3">Spindle</location>
    </subcellularLocation>
    <subcellularLocation>
        <location evidence="2">Cytoplasm</location>
    </subcellularLocation>
    <subcellularLocation>
        <location evidence="2">Cell projection</location>
        <location evidence="2">Lamellipodium membrane</location>
        <topology evidence="2">Peripheral membrane protein</topology>
        <orientation evidence="2">Cytoplasmic side</orientation>
    </subcellularLocation>
    <subcellularLocation>
        <location evidence="2">Cell projection</location>
        <location evidence="2">Dendrite</location>
    </subcellularLocation>
    <text evidence="2 3">Localizes to spindle during prometaphase cells. Moves to the central spindle as cells progressed through anaphase to telophase. Localizes at the end of cytokinesis in the intercellular bridge formed between two daughter cells. Its localization is regulated by the activities of guanine nucleotide exchange factor ECT2 and GTPase activating protein RACGAP1. Colocalizes with NEK6 in the centrosome. In its active GTP-bound form localizes to the leading edge membrane of migrating dendritic cells.</text>
</comment>
<comment type="alternative products">
    <event type="alternative splicing"/>
    <isoform>
        <id>Q2KJ93-1</id>
        <name>1</name>
        <name>Placental</name>
        <sequence type="displayed"/>
    </isoform>
    <isoform>
        <id>Q2KJ93-2</id>
        <name>2</name>
        <name>Brain</name>
        <sequence type="described" ref="VSP_040581 VSP_040582"/>
    </isoform>
</comment>
<comment type="PTM">
    <text evidence="6">It was shown that the protein isolated from brain is geranylgeranylated and methylated, but the protein sequence was not determined. The isoform in that report was undoubtedly the brain isoform, the sequence of which has not been reported (PubMed:1898776).</text>
</comment>
<comment type="PTM">
    <text evidence="1">Phosphorylated by SRC in an EGF-dependent manner, this stimulates the binding of the Rho-GDP dissociation inhibitor RhoGDI.</text>
</comment>
<comment type="similarity">
    <text evidence="7">Belongs to the small GTPase superfamily. Rho family. CDC42 subfamily.</text>
</comment>
<feature type="chain" id="PRO_0000270823" description="Cell division control protein 42 homolog">
    <location>
        <begin position="1"/>
        <end position="188"/>
    </location>
</feature>
<feature type="propeptide" id="PRO_0000270824" description="Removed in mature form" evidence="1">
    <location>
        <begin position="189"/>
        <end position="191"/>
    </location>
</feature>
<feature type="short sequence motif" description="Effector region" evidence="5">
    <location>
        <begin position="32"/>
        <end position="40"/>
    </location>
</feature>
<feature type="binding site" evidence="1">
    <location>
        <begin position="10"/>
        <end position="17"/>
    </location>
    <ligand>
        <name>GTP</name>
        <dbReference type="ChEBI" id="CHEBI:37565"/>
    </ligand>
</feature>
<feature type="binding site" evidence="1">
    <location>
        <begin position="57"/>
        <end position="61"/>
    </location>
    <ligand>
        <name>GTP</name>
        <dbReference type="ChEBI" id="CHEBI:37565"/>
    </ligand>
</feature>
<feature type="binding site" evidence="1">
    <location>
        <begin position="115"/>
        <end position="118"/>
    </location>
    <ligand>
        <name>GTP</name>
        <dbReference type="ChEBI" id="CHEBI:37565"/>
    </ligand>
</feature>
<feature type="modified residue" description="Phosphotyrosine; by SRC" evidence="3">
    <location>
        <position position="64"/>
    </location>
</feature>
<feature type="modified residue" description="Cysteine methyl ester" evidence="1">
    <location>
        <position position="188"/>
    </location>
</feature>
<feature type="lipid moiety-binding region" description="S-geranylgeranyl cysteine" evidence="1">
    <location>
        <position position="188"/>
    </location>
</feature>
<feature type="splice variant" id="VSP_040581" description="In isoform 2." evidence="7">
    <original>K</original>
    <variation>R</variation>
    <location>
        <position position="163"/>
    </location>
</feature>
<feature type="splice variant" id="VSP_040582" description="In isoform 2." evidence="7">
    <original>PKKSRRCVLL</original>
    <variation>TQPKRKCCIF</variation>
    <location>
        <begin position="182"/>
        <end position="191"/>
    </location>
</feature>
<reference key="1">
    <citation type="submission" date="2005-09" db="EMBL/GenBank/DDBJ databases">
        <authorList>
            <consortium name="NIH - Mammalian Gene Collection (MGC) project"/>
        </authorList>
    </citation>
    <scope>NUCLEOTIDE SEQUENCE [LARGE SCALE MRNA] (ISOFORM 1)</scope>
    <source>
        <strain>Hereford</strain>
        <tissue>Heart ventricle</tissue>
    </source>
</reference>
<reference key="2">
    <citation type="journal article" date="2009" name="Science">
        <title>The genome sequence of taurine cattle: a window to ruminant biology and evolution.</title>
        <authorList>
            <consortium name="The bovine genome sequencing and analysis consortium"/>
        </authorList>
    </citation>
    <scope>NUCLEOTIDE SEQUENCE [LARGE SCALE GENOMIC DNA]</scope>
    <source>
        <strain>Hereford</strain>
    </source>
</reference>
<reference key="3">
    <citation type="journal article" date="1991" name="Proc. Natl. Acad. Sci. U.S.A.">
        <title>Membrane-binding domain of the small G protein G25K contains an S-(all-trans-geranylgeranyl)cysteine methyl ester at its carboxyl terminus.</title>
        <authorList>
            <person name="Yamane H.K."/>
            <person name="Farnsworth C.C."/>
            <person name="Xie H.Y."/>
            <person name="Evans T."/>
            <person name="Howald W.N."/>
            <person name="Gelb M.H."/>
            <person name="Glomset J.A."/>
            <person name="Clarke S."/>
            <person name="Fung B.K.-K."/>
        </authorList>
    </citation>
    <scope>PROTEIN SEQUENCE OF 108-120 AND 122-128</scope>
    <scope>ISOPRENYLATION (ISOFORM 2)</scope>
    <source>
        <tissue>Brain</tissue>
    </source>
</reference>
<sequence>MQTIKCVVVGDGAVGKTCLLISYTTNKFPSEYVPTVFDNYAVTVMIGGEPYTLGLFDTAGQEDYDRLRPLSYPQTDVFLVCFSVVSPSSFENVKEKWVPEITHHCPKTPFLLVGTQIDLRDDPSTIEKLAKNKQKPITPETAEKLARDLKAVKYVECSALTQKGLKNVFDEAILAALEPPEPKKSRRCVLL</sequence>
<gene>
    <name type="primary">CDC42</name>
</gene>
<evidence type="ECO:0000250" key="1"/>
<evidence type="ECO:0000250" key="2">
    <source>
        <dbReference type="UniProtKB" id="P60766"/>
    </source>
</evidence>
<evidence type="ECO:0000250" key="3">
    <source>
        <dbReference type="UniProtKB" id="P60953"/>
    </source>
</evidence>
<evidence type="ECO:0000250" key="4">
    <source>
        <dbReference type="UniProtKB" id="Q8CFN2"/>
    </source>
</evidence>
<evidence type="ECO:0000255" key="5"/>
<evidence type="ECO:0000269" key="6">
    <source>
    </source>
</evidence>
<evidence type="ECO:0000305" key="7"/>